<comment type="function">
    <text evidence="1">Binds the 23S rRNA.</text>
</comment>
<comment type="cofactor">
    <cofactor evidence="1">
        <name>Zn(2+)</name>
        <dbReference type="ChEBI" id="CHEBI:29105"/>
    </cofactor>
    <text evidence="1">Binds 1 zinc ion per subunit.</text>
</comment>
<comment type="subunit">
    <text evidence="1">Part of the 50S ribosomal subunit.</text>
</comment>
<comment type="similarity">
    <text evidence="1">Belongs to the bacterial ribosomal protein bL31 family. Type A subfamily.</text>
</comment>
<accession>B8F5P3</accession>
<sequence length="70" mass="7756">MKQGIHPNYVEITATCSCGNVIKTHSTVGKDLNLDVCGNCHPFYTGKQRVVDTGGRVERFNKRFSIPSTK</sequence>
<proteinExistence type="inferred from homology"/>
<feature type="chain" id="PRO_1000176964" description="Large ribosomal subunit protein bL31">
    <location>
        <begin position="1"/>
        <end position="70"/>
    </location>
</feature>
<feature type="binding site" evidence="1">
    <location>
        <position position="16"/>
    </location>
    <ligand>
        <name>Zn(2+)</name>
        <dbReference type="ChEBI" id="CHEBI:29105"/>
    </ligand>
</feature>
<feature type="binding site" evidence="1">
    <location>
        <position position="18"/>
    </location>
    <ligand>
        <name>Zn(2+)</name>
        <dbReference type="ChEBI" id="CHEBI:29105"/>
    </ligand>
</feature>
<feature type="binding site" evidence="1">
    <location>
        <position position="37"/>
    </location>
    <ligand>
        <name>Zn(2+)</name>
        <dbReference type="ChEBI" id="CHEBI:29105"/>
    </ligand>
</feature>
<feature type="binding site" evidence="1">
    <location>
        <position position="40"/>
    </location>
    <ligand>
        <name>Zn(2+)</name>
        <dbReference type="ChEBI" id="CHEBI:29105"/>
    </ligand>
</feature>
<protein>
    <recommendedName>
        <fullName evidence="1">Large ribosomal subunit protein bL31</fullName>
    </recommendedName>
    <alternativeName>
        <fullName evidence="2">50S ribosomal protein L31</fullName>
    </alternativeName>
</protein>
<gene>
    <name evidence="1" type="primary">rpmE</name>
    <name type="ordered locus">HAPS_1026</name>
</gene>
<dbReference type="EMBL" id="CP001321">
    <property type="protein sequence ID" value="ACL32645.1"/>
    <property type="molecule type" value="Genomic_DNA"/>
</dbReference>
<dbReference type="RefSeq" id="WP_010787084.1">
    <property type="nucleotide sequence ID" value="NC_011852.1"/>
</dbReference>
<dbReference type="SMR" id="B8F5P3"/>
<dbReference type="STRING" id="557723.HAPS_1026"/>
<dbReference type="KEGG" id="hap:HAPS_1026"/>
<dbReference type="PATRIC" id="fig|557723.8.peg.1022"/>
<dbReference type="HOGENOM" id="CLU_114306_4_3_6"/>
<dbReference type="Proteomes" id="UP000006743">
    <property type="component" value="Chromosome"/>
</dbReference>
<dbReference type="GO" id="GO:1990904">
    <property type="term" value="C:ribonucleoprotein complex"/>
    <property type="evidence" value="ECO:0007669"/>
    <property type="project" value="UniProtKB-KW"/>
</dbReference>
<dbReference type="GO" id="GO:0005840">
    <property type="term" value="C:ribosome"/>
    <property type="evidence" value="ECO:0007669"/>
    <property type="project" value="UniProtKB-KW"/>
</dbReference>
<dbReference type="GO" id="GO:0046872">
    <property type="term" value="F:metal ion binding"/>
    <property type="evidence" value="ECO:0007669"/>
    <property type="project" value="UniProtKB-KW"/>
</dbReference>
<dbReference type="GO" id="GO:0019843">
    <property type="term" value="F:rRNA binding"/>
    <property type="evidence" value="ECO:0007669"/>
    <property type="project" value="UniProtKB-KW"/>
</dbReference>
<dbReference type="GO" id="GO:0003735">
    <property type="term" value="F:structural constituent of ribosome"/>
    <property type="evidence" value="ECO:0007669"/>
    <property type="project" value="InterPro"/>
</dbReference>
<dbReference type="GO" id="GO:0006412">
    <property type="term" value="P:translation"/>
    <property type="evidence" value="ECO:0007669"/>
    <property type="project" value="UniProtKB-UniRule"/>
</dbReference>
<dbReference type="FunFam" id="4.10.830.30:FF:000001">
    <property type="entry name" value="50S ribosomal protein L31"/>
    <property type="match status" value="1"/>
</dbReference>
<dbReference type="Gene3D" id="4.10.830.30">
    <property type="entry name" value="Ribosomal protein L31"/>
    <property type="match status" value="1"/>
</dbReference>
<dbReference type="HAMAP" id="MF_00501">
    <property type="entry name" value="Ribosomal_bL31_1"/>
    <property type="match status" value="1"/>
</dbReference>
<dbReference type="InterPro" id="IPR034704">
    <property type="entry name" value="Ribosomal_bL28/bL31-like_sf"/>
</dbReference>
<dbReference type="InterPro" id="IPR002150">
    <property type="entry name" value="Ribosomal_bL31"/>
</dbReference>
<dbReference type="InterPro" id="IPR027491">
    <property type="entry name" value="Ribosomal_bL31_A"/>
</dbReference>
<dbReference type="InterPro" id="IPR042105">
    <property type="entry name" value="Ribosomal_bL31_sf"/>
</dbReference>
<dbReference type="NCBIfam" id="TIGR00105">
    <property type="entry name" value="L31"/>
    <property type="match status" value="1"/>
</dbReference>
<dbReference type="NCBIfam" id="NF000612">
    <property type="entry name" value="PRK00019.1"/>
    <property type="match status" value="1"/>
</dbReference>
<dbReference type="NCBIfam" id="NF001809">
    <property type="entry name" value="PRK00528.1"/>
    <property type="match status" value="1"/>
</dbReference>
<dbReference type="PANTHER" id="PTHR33280">
    <property type="entry name" value="50S RIBOSOMAL PROTEIN L31, CHLOROPLASTIC"/>
    <property type="match status" value="1"/>
</dbReference>
<dbReference type="PANTHER" id="PTHR33280:SF6">
    <property type="entry name" value="LARGE RIBOSOMAL SUBUNIT PROTEIN BL31A"/>
    <property type="match status" value="1"/>
</dbReference>
<dbReference type="Pfam" id="PF01197">
    <property type="entry name" value="Ribosomal_L31"/>
    <property type="match status" value="1"/>
</dbReference>
<dbReference type="PRINTS" id="PR01249">
    <property type="entry name" value="RIBOSOMALL31"/>
</dbReference>
<dbReference type="SUPFAM" id="SSF143800">
    <property type="entry name" value="L28p-like"/>
    <property type="match status" value="1"/>
</dbReference>
<dbReference type="PROSITE" id="PS01143">
    <property type="entry name" value="RIBOSOMAL_L31"/>
    <property type="match status" value="1"/>
</dbReference>
<evidence type="ECO:0000255" key="1">
    <source>
        <dbReference type="HAMAP-Rule" id="MF_00501"/>
    </source>
</evidence>
<evidence type="ECO:0000305" key="2"/>
<name>RL31_GLAP5</name>
<reference key="1">
    <citation type="journal article" date="2009" name="J. Bacteriol.">
        <title>Complete genome sequence of Haemophilus parasuis SH0165.</title>
        <authorList>
            <person name="Yue M."/>
            <person name="Yang F."/>
            <person name="Yang J."/>
            <person name="Bei W."/>
            <person name="Cai X."/>
            <person name="Chen L."/>
            <person name="Dong J."/>
            <person name="Zhou R."/>
            <person name="Jin M."/>
            <person name="Jin Q."/>
            <person name="Chen H."/>
        </authorList>
    </citation>
    <scope>NUCLEOTIDE SEQUENCE [LARGE SCALE GENOMIC DNA]</scope>
    <source>
        <strain>SH0165</strain>
    </source>
</reference>
<keyword id="KW-0479">Metal-binding</keyword>
<keyword id="KW-1185">Reference proteome</keyword>
<keyword id="KW-0687">Ribonucleoprotein</keyword>
<keyword id="KW-0689">Ribosomal protein</keyword>
<keyword id="KW-0694">RNA-binding</keyword>
<keyword id="KW-0699">rRNA-binding</keyword>
<keyword id="KW-0862">Zinc</keyword>
<organism>
    <name type="scientific">Glaesserella parasuis serovar 5 (strain SH0165)</name>
    <name type="common">Haemophilus parasuis</name>
    <dbReference type="NCBI Taxonomy" id="557723"/>
    <lineage>
        <taxon>Bacteria</taxon>
        <taxon>Pseudomonadati</taxon>
        <taxon>Pseudomonadota</taxon>
        <taxon>Gammaproteobacteria</taxon>
        <taxon>Pasteurellales</taxon>
        <taxon>Pasteurellaceae</taxon>
        <taxon>Glaesserella</taxon>
    </lineage>
</organism>